<keyword id="KW-1003">Cell membrane</keyword>
<keyword id="KW-0449">Lipoprotein</keyword>
<keyword id="KW-0472">Membrane</keyword>
<keyword id="KW-0564">Palmitate</keyword>
<keyword id="KW-0732">Signal</keyword>
<accession>Q5HW96</accession>
<organism>
    <name type="scientific">Campylobacter jejuni (strain RM1221)</name>
    <dbReference type="NCBI Taxonomy" id="195099"/>
    <lineage>
        <taxon>Bacteria</taxon>
        <taxon>Pseudomonadati</taxon>
        <taxon>Campylobacterota</taxon>
        <taxon>Epsilonproteobacteria</taxon>
        <taxon>Campylobacterales</taxon>
        <taxon>Campylobacteraceae</taxon>
        <taxon>Campylobacter</taxon>
    </lineage>
</organism>
<reference key="1">
    <citation type="journal article" date="2005" name="PLoS Biol.">
        <title>Major structural differences and novel potential virulence mechanisms from the genomes of multiple Campylobacter species.</title>
        <authorList>
            <person name="Fouts D.E."/>
            <person name="Mongodin E.F."/>
            <person name="Mandrell R.E."/>
            <person name="Miller W.G."/>
            <person name="Rasko D.A."/>
            <person name="Ravel J."/>
            <person name="Brinkac L.M."/>
            <person name="DeBoy R.T."/>
            <person name="Parker C.T."/>
            <person name="Daugherty S.C."/>
            <person name="Dodson R.J."/>
            <person name="Durkin A.S."/>
            <person name="Madupu R."/>
            <person name="Sullivan S.A."/>
            <person name="Shetty J.U."/>
            <person name="Ayodeji M.A."/>
            <person name="Shvartsbeyn A."/>
            <person name="Schatz M.C."/>
            <person name="Badger J.H."/>
            <person name="Fraser C.M."/>
            <person name="Nelson K.E."/>
        </authorList>
    </citation>
    <scope>NUCLEOTIDE SEQUENCE [LARGE SCALE GENOMIC DNA]</scope>
    <source>
        <strain>RM1221</strain>
    </source>
</reference>
<sequence length="201" mass="20698">MKKIKKIIQIGMIGGLAAVAGGALAGCGSNNDNADTLNQAANAQGAFVIIEETAPGQYKIKDQYPSDETRVVLKDLNGTERILSKEEMDALIKEEAAKIDNGTSNLTKDNGQISSGGLSLGETLLASAAGAILGSWIGSKLFNNQNFANQQRGAFSNQSAYQRSVNSFNKAGTTSSASSAKKSGFFGGGSKATSSSSSFGS</sequence>
<proteinExistence type="inferred from homology"/>
<comment type="subcellular location">
    <subcellularLocation>
        <location evidence="1">Cell membrane</location>
        <topology evidence="1">Lipid-anchor</topology>
    </subcellularLocation>
</comment>
<comment type="similarity">
    <text evidence="1">Belongs to the UPF0323 family.</text>
</comment>
<evidence type="ECO:0000255" key="1">
    <source>
        <dbReference type="HAMAP-Rule" id="MF_01421"/>
    </source>
</evidence>
<evidence type="ECO:0000256" key="2">
    <source>
        <dbReference type="SAM" id="MobiDB-lite"/>
    </source>
</evidence>
<name>Y420_CAMJR</name>
<protein>
    <recommendedName>
        <fullName evidence="1">UPF0323 lipoprotein CJE0420</fullName>
    </recommendedName>
</protein>
<feature type="signal peptide" evidence="1">
    <location>
        <begin position="1"/>
        <end position="26"/>
    </location>
</feature>
<feature type="chain" id="PRO_0000036324" description="UPF0323 lipoprotein CJE0420">
    <location>
        <begin position="27"/>
        <end position="201"/>
    </location>
</feature>
<feature type="region of interest" description="Disordered" evidence="2">
    <location>
        <begin position="169"/>
        <end position="201"/>
    </location>
</feature>
<feature type="compositionally biased region" description="Low complexity" evidence="2">
    <location>
        <begin position="170"/>
        <end position="184"/>
    </location>
</feature>
<feature type="compositionally biased region" description="Low complexity" evidence="2">
    <location>
        <begin position="191"/>
        <end position="201"/>
    </location>
</feature>
<feature type="lipid moiety-binding region" description="N-palmitoyl cysteine" evidence="1">
    <location>
        <position position="27"/>
    </location>
</feature>
<feature type="lipid moiety-binding region" description="S-diacylglycerol cysteine" evidence="1">
    <location>
        <position position="27"/>
    </location>
</feature>
<gene>
    <name type="ordered locus">CJE0420</name>
</gene>
<dbReference type="EMBL" id="CP000025">
    <property type="protein sequence ID" value="AAW35009.1"/>
    <property type="molecule type" value="Genomic_DNA"/>
</dbReference>
<dbReference type="RefSeq" id="WP_002854351.1">
    <property type="nucleotide sequence ID" value="NC_003912.7"/>
</dbReference>
<dbReference type="KEGG" id="cjr:CJE0420"/>
<dbReference type="HOGENOM" id="CLU_111520_0_0_7"/>
<dbReference type="GO" id="GO:0005886">
    <property type="term" value="C:plasma membrane"/>
    <property type="evidence" value="ECO:0007669"/>
    <property type="project" value="UniProtKB-SubCell"/>
</dbReference>
<dbReference type="HAMAP" id="MF_01421">
    <property type="entry name" value="UPF0323"/>
    <property type="match status" value="1"/>
</dbReference>
<dbReference type="InterPro" id="IPR020913">
    <property type="entry name" value="UPF0323"/>
</dbReference>
<dbReference type="NCBIfam" id="NF003146">
    <property type="entry name" value="PRK04081.1"/>
    <property type="match status" value="1"/>
</dbReference>
<dbReference type="PROSITE" id="PS51257">
    <property type="entry name" value="PROKAR_LIPOPROTEIN"/>
    <property type="match status" value="1"/>
</dbReference>